<name>GCH1_LEPIC</name>
<feature type="chain" id="PRO_0000119417" description="GTP cyclohydrolase 1">
    <location>
        <begin position="1"/>
        <end position="183"/>
    </location>
</feature>
<feature type="binding site" evidence="2">
    <location>
        <position position="71"/>
    </location>
    <ligand>
        <name>Zn(2+)</name>
        <dbReference type="ChEBI" id="CHEBI:29105"/>
    </ligand>
</feature>
<feature type="binding site" evidence="2">
    <location>
        <position position="74"/>
    </location>
    <ligand>
        <name>Zn(2+)</name>
        <dbReference type="ChEBI" id="CHEBI:29105"/>
    </ligand>
</feature>
<feature type="binding site" evidence="2">
    <location>
        <position position="142"/>
    </location>
    <ligand>
        <name>Zn(2+)</name>
        <dbReference type="ChEBI" id="CHEBI:29105"/>
    </ligand>
</feature>
<evidence type="ECO:0000250" key="1"/>
<evidence type="ECO:0000255" key="2">
    <source>
        <dbReference type="HAMAP-Rule" id="MF_00223"/>
    </source>
</evidence>
<sequence>MEEDVINILKSIGEDPTREGLLNTPKRVKKAYEFLTSGYRADITKIVNGAIFEEPTEGMVLVRDIEMYSLCEHHLLPFYGKAHVAYLPNKKIIGISKIPRIVDVFARRLQVQERLTEQIAYAIQEVLDPQGVAVVIKAKHLCMMMRGVEKQNSELFTSCMLGAFKENMVTRSEFLDLIRTGST</sequence>
<gene>
    <name evidence="2" type="primary">folE</name>
    <name type="ordered locus">LIC_13405</name>
</gene>
<proteinExistence type="inferred from homology"/>
<comment type="catalytic activity">
    <reaction evidence="2">
        <text>GTP + H2O = 7,8-dihydroneopterin 3'-triphosphate + formate + H(+)</text>
        <dbReference type="Rhea" id="RHEA:17473"/>
        <dbReference type="ChEBI" id="CHEBI:15377"/>
        <dbReference type="ChEBI" id="CHEBI:15378"/>
        <dbReference type="ChEBI" id="CHEBI:15740"/>
        <dbReference type="ChEBI" id="CHEBI:37565"/>
        <dbReference type="ChEBI" id="CHEBI:58462"/>
        <dbReference type="EC" id="3.5.4.16"/>
    </reaction>
</comment>
<comment type="pathway">
    <text evidence="2">Cofactor biosynthesis; 7,8-dihydroneopterin triphosphate biosynthesis; 7,8-dihydroneopterin triphosphate from GTP: step 1/1.</text>
</comment>
<comment type="subunit">
    <text evidence="1">Toroid-shaped homodecamer, composed of two pentamers of five dimers.</text>
</comment>
<comment type="similarity">
    <text evidence="2">Belongs to the GTP cyclohydrolase I family.</text>
</comment>
<organism>
    <name type="scientific">Leptospira interrogans serogroup Icterohaemorrhagiae serovar copenhageni (strain Fiocruz L1-130)</name>
    <dbReference type="NCBI Taxonomy" id="267671"/>
    <lineage>
        <taxon>Bacteria</taxon>
        <taxon>Pseudomonadati</taxon>
        <taxon>Spirochaetota</taxon>
        <taxon>Spirochaetia</taxon>
        <taxon>Leptospirales</taxon>
        <taxon>Leptospiraceae</taxon>
        <taxon>Leptospira</taxon>
    </lineage>
</organism>
<accession>Q72LY8</accession>
<protein>
    <recommendedName>
        <fullName evidence="2">GTP cyclohydrolase 1</fullName>
        <ecNumber evidence="2">3.5.4.16</ecNumber>
    </recommendedName>
    <alternativeName>
        <fullName evidence="2">GTP cyclohydrolase I</fullName>
        <shortName evidence="2">GTP-CH-I</shortName>
    </alternativeName>
</protein>
<reference key="1">
    <citation type="journal article" date="2004" name="J. Bacteriol.">
        <title>Comparative genomics of two Leptospira interrogans serovars reveals novel insights into physiology and pathogenesis.</title>
        <authorList>
            <person name="Nascimento A.L.T.O."/>
            <person name="Ko A.I."/>
            <person name="Martins E.A.L."/>
            <person name="Monteiro-Vitorello C.B."/>
            <person name="Ho P.L."/>
            <person name="Haake D.A."/>
            <person name="Verjovski-Almeida S."/>
            <person name="Hartskeerl R.A."/>
            <person name="Marques M.V."/>
            <person name="Oliveira M.C."/>
            <person name="Menck C.F.M."/>
            <person name="Leite L.C.C."/>
            <person name="Carrer H."/>
            <person name="Coutinho L.L."/>
            <person name="Degrave W.M."/>
            <person name="Dellagostin O.A."/>
            <person name="El-Dorry H."/>
            <person name="Ferro E.S."/>
            <person name="Ferro M.I.T."/>
            <person name="Furlan L.R."/>
            <person name="Gamberini M."/>
            <person name="Giglioti E.A."/>
            <person name="Goes-Neto A."/>
            <person name="Goldman G.H."/>
            <person name="Goldman M.H.S."/>
            <person name="Harakava R."/>
            <person name="Jeronimo S.M.B."/>
            <person name="Junqueira-de-Azevedo I.L.M."/>
            <person name="Kimura E.T."/>
            <person name="Kuramae E.E."/>
            <person name="Lemos E.G.M."/>
            <person name="Lemos M.V.F."/>
            <person name="Marino C.L."/>
            <person name="Nunes L.R."/>
            <person name="de Oliveira R.C."/>
            <person name="Pereira G.G."/>
            <person name="Reis M.S."/>
            <person name="Schriefer A."/>
            <person name="Siqueira W.J."/>
            <person name="Sommer P."/>
            <person name="Tsai S.M."/>
            <person name="Simpson A.J.G."/>
            <person name="Ferro J.A."/>
            <person name="Camargo L.E.A."/>
            <person name="Kitajima J.P."/>
            <person name="Setubal J.C."/>
            <person name="Van Sluys M.A."/>
        </authorList>
    </citation>
    <scope>NUCLEOTIDE SEQUENCE [LARGE SCALE GENOMIC DNA]</scope>
    <source>
        <strain>Fiocruz L1-130</strain>
    </source>
</reference>
<dbReference type="EC" id="3.5.4.16" evidence="2"/>
<dbReference type="EMBL" id="AE016823">
    <property type="protein sequence ID" value="AAS71945.1"/>
    <property type="molecule type" value="Genomic_DNA"/>
</dbReference>
<dbReference type="RefSeq" id="WP_000390685.1">
    <property type="nucleotide sequence ID" value="NC_005823.1"/>
</dbReference>
<dbReference type="SMR" id="Q72LY8"/>
<dbReference type="GeneID" id="61143269"/>
<dbReference type="KEGG" id="lic:LIC_13405"/>
<dbReference type="HOGENOM" id="CLU_049768_3_1_12"/>
<dbReference type="UniPathway" id="UPA00848">
    <property type="reaction ID" value="UER00151"/>
</dbReference>
<dbReference type="Proteomes" id="UP000007037">
    <property type="component" value="Chromosome I"/>
</dbReference>
<dbReference type="GO" id="GO:0005737">
    <property type="term" value="C:cytoplasm"/>
    <property type="evidence" value="ECO:0007669"/>
    <property type="project" value="TreeGrafter"/>
</dbReference>
<dbReference type="GO" id="GO:0005525">
    <property type="term" value="F:GTP binding"/>
    <property type="evidence" value="ECO:0007669"/>
    <property type="project" value="UniProtKB-KW"/>
</dbReference>
<dbReference type="GO" id="GO:0003934">
    <property type="term" value="F:GTP cyclohydrolase I activity"/>
    <property type="evidence" value="ECO:0007669"/>
    <property type="project" value="UniProtKB-UniRule"/>
</dbReference>
<dbReference type="GO" id="GO:0008270">
    <property type="term" value="F:zinc ion binding"/>
    <property type="evidence" value="ECO:0007669"/>
    <property type="project" value="UniProtKB-UniRule"/>
</dbReference>
<dbReference type="GO" id="GO:0006730">
    <property type="term" value="P:one-carbon metabolic process"/>
    <property type="evidence" value="ECO:0007669"/>
    <property type="project" value="UniProtKB-UniRule"/>
</dbReference>
<dbReference type="GO" id="GO:0006729">
    <property type="term" value="P:tetrahydrobiopterin biosynthetic process"/>
    <property type="evidence" value="ECO:0007669"/>
    <property type="project" value="TreeGrafter"/>
</dbReference>
<dbReference type="GO" id="GO:0046654">
    <property type="term" value="P:tetrahydrofolate biosynthetic process"/>
    <property type="evidence" value="ECO:0007669"/>
    <property type="project" value="UniProtKB-UniRule"/>
</dbReference>
<dbReference type="FunFam" id="1.10.286.10:FF:000005">
    <property type="entry name" value="GTP cyclohydrolase 1"/>
    <property type="match status" value="1"/>
</dbReference>
<dbReference type="FunFam" id="3.30.1130.10:FF:000001">
    <property type="entry name" value="GTP cyclohydrolase 1"/>
    <property type="match status" value="1"/>
</dbReference>
<dbReference type="Gene3D" id="1.10.286.10">
    <property type="match status" value="1"/>
</dbReference>
<dbReference type="Gene3D" id="3.30.1130.10">
    <property type="match status" value="1"/>
</dbReference>
<dbReference type="HAMAP" id="MF_00223">
    <property type="entry name" value="FolE"/>
    <property type="match status" value="1"/>
</dbReference>
<dbReference type="InterPro" id="IPR043133">
    <property type="entry name" value="GTP-CH-I_C/QueF"/>
</dbReference>
<dbReference type="InterPro" id="IPR043134">
    <property type="entry name" value="GTP-CH-I_N"/>
</dbReference>
<dbReference type="InterPro" id="IPR001474">
    <property type="entry name" value="GTP_CycHdrlase_I"/>
</dbReference>
<dbReference type="InterPro" id="IPR018234">
    <property type="entry name" value="GTP_CycHdrlase_I_CS"/>
</dbReference>
<dbReference type="InterPro" id="IPR020602">
    <property type="entry name" value="GTP_CycHdrlase_I_dom"/>
</dbReference>
<dbReference type="NCBIfam" id="TIGR00063">
    <property type="entry name" value="folE"/>
    <property type="match status" value="1"/>
</dbReference>
<dbReference type="NCBIfam" id="NF006825">
    <property type="entry name" value="PRK09347.1-2"/>
    <property type="match status" value="1"/>
</dbReference>
<dbReference type="NCBIfam" id="NF006826">
    <property type="entry name" value="PRK09347.1-3"/>
    <property type="match status" value="1"/>
</dbReference>
<dbReference type="PANTHER" id="PTHR11109:SF7">
    <property type="entry name" value="GTP CYCLOHYDROLASE 1"/>
    <property type="match status" value="1"/>
</dbReference>
<dbReference type="PANTHER" id="PTHR11109">
    <property type="entry name" value="GTP CYCLOHYDROLASE I"/>
    <property type="match status" value="1"/>
</dbReference>
<dbReference type="Pfam" id="PF01227">
    <property type="entry name" value="GTP_cyclohydroI"/>
    <property type="match status" value="1"/>
</dbReference>
<dbReference type="SUPFAM" id="SSF55620">
    <property type="entry name" value="Tetrahydrobiopterin biosynthesis enzymes-like"/>
    <property type="match status" value="1"/>
</dbReference>
<dbReference type="PROSITE" id="PS00859">
    <property type="entry name" value="GTP_CYCLOHYDROL_1_1"/>
    <property type="match status" value="1"/>
</dbReference>
<dbReference type="PROSITE" id="PS00860">
    <property type="entry name" value="GTP_CYCLOHYDROL_1_2"/>
    <property type="match status" value="1"/>
</dbReference>
<keyword id="KW-0342">GTP-binding</keyword>
<keyword id="KW-0378">Hydrolase</keyword>
<keyword id="KW-0479">Metal-binding</keyword>
<keyword id="KW-0547">Nucleotide-binding</keyword>
<keyword id="KW-0554">One-carbon metabolism</keyword>
<keyword id="KW-0862">Zinc</keyword>